<organism>
    <name type="scientific">Rattus norvegicus</name>
    <name type="common">Rat</name>
    <dbReference type="NCBI Taxonomy" id="10116"/>
    <lineage>
        <taxon>Eukaryota</taxon>
        <taxon>Metazoa</taxon>
        <taxon>Chordata</taxon>
        <taxon>Craniata</taxon>
        <taxon>Vertebrata</taxon>
        <taxon>Euteleostomi</taxon>
        <taxon>Mammalia</taxon>
        <taxon>Eutheria</taxon>
        <taxon>Euarchontoglires</taxon>
        <taxon>Glires</taxon>
        <taxon>Rodentia</taxon>
        <taxon>Myomorpha</taxon>
        <taxon>Muroidea</taxon>
        <taxon>Muridae</taxon>
        <taxon>Murinae</taxon>
        <taxon>Rattus</taxon>
    </lineage>
</organism>
<name>PD2R2_RAT</name>
<evidence type="ECO:0000250" key="1"/>
<evidence type="ECO:0000250" key="2">
    <source>
        <dbReference type="UniProtKB" id="Q9Z2J6"/>
    </source>
</evidence>
<evidence type="ECO:0000255" key="3"/>
<evidence type="ECO:0000255" key="4">
    <source>
        <dbReference type="PROSITE-ProRule" id="PRU00521"/>
    </source>
</evidence>
<evidence type="ECO:0000256" key="5">
    <source>
        <dbReference type="SAM" id="MobiDB-lite"/>
    </source>
</evidence>
<evidence type="ECO:0007744" key="6">
    <source>
    </source>
</evidence>
<accession>Q6XKD3</accession>
<feature type="chain" id="PRO_0000415926" description="Prostaglandin D2 receptor 2">
    <location>
        <begin position="1"/>
        <end position="403"/>
    </location>
</feature>
<feature type="topological domain" description="Extracellular" evidence="3">
    <location>
        <begin position="1"/>
        <end position="34"/>
    </location>
</feature>
<feature type="transmembrane region" description="Helical; Name=1" evidence="3">
    <location>
        <begin position="35"/>
        <end position="55"/>
    </location>
</feature>
<feature type="topological domain" description="Cytoplasmic" evidence="3">
    <location>
        <begin position="56"/>
        <end position="71"/>
    </location>
</feature>
<feature type="transmembrane region" description="Helical; Name=2" evidence="3">
    <location>
        <begin position="72"/>
        <end position="92"/>
    </location>
</feature>
<feature type="topological domain" description="Extracellular" evidence="3">
    <location>
        <begin position="93"/>
        <end position="104"/>
    </location>
</feature>
<feature type="transmembrane region" description="Helical; Name=3" evidence="3">
    <location>
        <begin position="105"/>
        <end position="125"/>
    </location>
</feature>
<feature type="topological domain" description="Cytoplasmic" evidence="3">
    <location>
        <begin position="126"/>
        <end position="147"/>
    </location>
</feature>
<feature type="transmembrane region" description="Helical; Name=4" evidence="3">
    <location>
        <begin position="148"/>
        <end position="168"/>
    </location>
</feature>
<feature type="topological domain" description="Extracellular" evidence="3">
    <location>
        <begin position="169"/>
        <end position="209"/>
    </location>
</feature>
<feature type="transmembrane region" description="Helical; Name=5" evidence="3">
    <location>
        <begin position="210"/>
        <end position="230"/>
    </location>
</feature>
<feature type="topological domain" description="Cytoplasmic" evidence="3">
    <location>
        <begin position="231"/>
        <end position="245"/>
    </location>
</feature>
<feature type="transmembrane region" description="Helical; Name=6" evidence="3">
    <location>
        <begin position="246"/>
        <end position="266"/>
    </location>
</feature>
<feature type="topological domain" description="Extracellular" evidence="3">
    <location>
        <begin position="267"/>
        <end position="284"/>
    </location>
</feature>
<feature type="transmembrane region" description="Helical; Name=7" evidence="3">
    <location>
        <begin position="285"/>
        <end position="305"/>
    </location>
</feature>
<feature type="topological domain" description="Cytoplasmic" evidence="3">
    <location>
        <begin position="306"/>
        <end position="403"/>
    </location>
</feature>
<feature type="region of interest" description="Disordered" evidence="5">
    <location>
        <begin position="332"/>
        <end position="353"/>
    </location>
</feature>
<feature type="region of interest" description="Disordered" evidence="5">
    <location>
        <begin position="384"/>
        <end position="403"/>
    </location>
</feature>
<feature type="short sequence motif" description="Involved in the recycling of CRTH2" evidence="1">
    <location>
        <begin position="329"/>
        <end position="332"/>
    </location>
</feature>
<feature type="compositionally biased region" description="Basic residues" evidence="5">
    <location>
        <begin position="338"/>
        <end position="348"/>
    </location>
</feature>
<feature type="compositionally biased region" description="Polar residues" evidence="5">
    <location>
        <begin position="393"/>
        <end position="403"/>
    </location>
</feature>
<feature type="modified residue" description="Phosphoserine" evidence="6">
    <location>
        <position position="330"/>
    </location>
</feature>
<feature type="modified residue" description="Phosphoserine" evidence="2">
    <location>
        <position position="349"/>
    </location>
</feature>
<feature type="glycosylation site" description="N-linked (GlcNAc...) asparagine" evidence="3">
    <location>
        <position position="3"/>
    </location>
</feature>
<feature type="glycosylation site" description="N-linked (GlcNAc...) asparagine" evidence="3">
    <location>
        <position position="21"/>
    </location>
</feature>
<feature type="glycosylation site" description="N-linked (GlcNAc...) asparagine" evidence="3">
    <location>
        <position position="24"/>
    </location>
</feature>
<feature type="disulfide bond" evidence="4">
    <location>
        <begin position="103"/>
        <end position="198"/>
    </location>
</feature>
<reference key="1">
    <citation type="submission" date="2003-02" db="EMBL/GenBank/DDBJ databases">
        <title>Cloning and characterization of rat CRTH2.</title>
        <authorList>
            <person name="Encinas J.A."/>
            <person name="Inbe H."/>
            <person name="Sugimoto H."/>
            <person name="Bacon K.B."/>
        </authorList>
    </citation>
    <scope>NUCLEOTIDE SEQUENCE [MRNA]</scope>
    <source>
        <strain>Sprague-Dawley</strain>
    </source>
</reference>
<reference key="2">
    <citation type="submission" date="2005-07" db="EMBL/GenBank/DDBJ databases">
        <authorList>
            <person name="Mural R.J."/>
            <person name="Adams M.D."/>
            <person name="Myers E.W."/>
            <person name="Smith H.O."/>
            <person name="Venter J.C."/>
        </authorList>
    </citation>
    <scope>NUCLEOTIDE SEQUENCE [LARGE SCALE GENOMIC DNA]</scope>
    <source>
        <strain>Brown Norway</strain>
    </source>
</reference>
<reference key="3">
    <citation type="journal article" date="2012" name="Nat. Commun.">
        <title>Quantitative maps of protein phosphorylation sites across 14 different rat organs and tissues.</title>
        <authorList>
            <person name="Lundby A."/>
            <person name="Secher A."/>
            <person name="Lage K."/>
            <person name="Nordsborg N.B."/>
            <person name="Dmytriyev A."/>
            <person name="Lundby C."/>
            <person name="Olsen J.V."/>
        </authorList>
    </citation>
    <scope>PHOSPHORYLATION [LARGE SCALE ANALYSIS] AT SER-330</scope>
    <scope>IDENTIFICATION BY MASS SPECTROMETRY [LARGE SCALE ANALYSIS]</scope>
</reference>
<protein>
    <recommendedName>
        <fullName>Prostaglandin D2 receptor 2</fullName>
    </recommendedName>
    <alternativeName>
        <fullName>G protein-coupled receptor 44</fullName>
    </alternativeName>
</protein>
<comment type="function">
    <text evidence="1">Receptor for prostaglandin D2 (PGD2). Coupled to the G(i)-protein. Receptor activation may result in pertussis toxin-sensitive decreases in cAMP levels and Ca(2+) mobilization. PI3K signaling is also implicated in mediating PTGDR2 effects. PGD2 induced receptor internalization. CRTH2 internalization can be regulated by diverse kinases such as, PKC, PKA, GRK2, GPRK5/GRK5 and GRK6. Receptor activation is responsible, at least in part, in immune regulation and allergic/inflammation responses (By similarity).</text>
</comment>
<comment type="subcellular location">
    <subcellularLocation>
        <location evidence="1">Cell membrane</location>
        <topology evidence="1">Multi-pass membrane protein</topology>
    </subcellularLocation>
    <text evidence="1">Internalized receptors colocalized with RAB11A.</text>
</comment>
<comment type="domain">
    <text evidence="1">The 329-DSEL-332 motif is involved in the recycling of PTGDR2 to the cell surface after agonist-induced internalization. This motif seems to be required for GRK2 and GPRK5/GRK5 to promote agonist-induced internalization (By similarity). Thr-351 is a major site for PKC-induced internalization of the receptor (By similarity).</text>
</comment>
<comment type="PTM">
    <text evidence="1">Phosphorylated.</text>
</comment>
<comment type="similarity">
    <text evidence="4">Belongs to the G-protein coupled receptor 1 family.</text>
</comment>
<dbReference type="EMBL" id="AY228550">
    <property type="protein sequence ID" value="AAP57088.1"/>
    <property type="molecule type" value="mRNA"/>
</dbReference>
<dbReference type="EMBL" id="CH473953">
    <property type="protein sequence ID" value="EDM12854.1"/>
    <property type="molecule type" value="Genomic_DNA"/>
</dbReference>
<dbReference type="RefSeq" id="NP_001012070.1">
    <property type="nucleotide sequence ID" value="NM_001012070.1"/>
</dbReference>
<dbReference type="RefSeq" id="XP_006231102.1">
    <property type="nucleotide sequence ID" value="XM_006231040.3"/>
</dbReference>
<dbReference type="RefSeq" id="XP_008758453.1">
    <property type="nucleotide sequence ID" value="XM_008760231.2"/>
</dbReference>
<dbReference type="RefSeq" id="XP_017444751.1">
    <property type="nucleotide sequence ID" value="XM_017589262.1"/>
</dbReference>
<dbReference type="RefSeq" id="XP_017444752.1">
    <property type="nucleotide sequence ID" value="XM_017589263.1"/>
</dbReference>
<dbReference type="RefSeq" id="XP_017444753.1">
    <property type="nucleotide sequence ID" value="XM_017589264.1"/>
</dbReference>
<dbReference type="RefSeq" id="XP_038935774.1">
    <property type="nucleotide sequence ID" value="XM_039079846.2"/>
</dbReference>
<dbReference type="RefSeq" id="XP_038935775.1">
    <property type="nucleotide sequence ID" value="XM_039079847.2"/>
</dbReference>
<dbReference type="RefSeq" id="XP_038935777.1">
    <property type="nucleotide sequence ID" value="XM_039079849.2"/>
</dbReference>
<dbReference type="RefSeq" id="XP_063120523.1">
    <property type="nucleotide sequence ID" value="XM_063264453.1"/>
</dbReference>
<dbReference type="RefSeq" id="XP_063120525.1">
    <property type="nucleotide sequence ID" value="XM_063264455.1"/>
</dbReference>
<dbReference type="SMR" id="Q6XKD3"/>
<dbReference type="FunCoup" id="Q6XKD3">
    <property type="interactions" value="112"/>
</dbReference>
<dbReference type="STRING" id="10116.ENSRNOP00000066082"/>
<dbReference type="BindingDB" id="Q6XKD3"/>
<dbReference type="ChEMBL" id="CHEMBL1075112"/>
<dbReference type="DrugCentral" id="Q6XKD3"/>
<dbReference type="GuidetoPHARMACOLOGY" id="339"/>
<dbReference type="GlyCosmos" id="Q6XKD3">
    <property type="glycosylation" value="3 sites, No reported glycans"/>
</dbReference>
<dbReference type="GlyGen" id="Q6XKD3">
    <property type="glycosylation" value="3 sites"/>
</dbReference>
<dbReference type="iPTMnet" id="Q6XKD3"/>
<dbReference type="PhosphoSitePlus" id="Q6XKD3"/>
<dbReference type="PaxDb" id="10116-ENSRNOP00000066082"/>
<dbReference type="Ensembl" id="ENSRNOT00000054808.5">
    <property type="protein sequence ID" value="ENSRNOP00000066082.1"/>
    <property type="gene ID" value="ENSRNOG00000036631.5"/>
</dbReference>
<dbReference type="GeneID" id="309212"/>
<dbReference type="KEGG" id="rno:309212"/>
<dbReference type="UCSC" id="RGD:1311986">
    <property type="organism name" value="rat"/>
</dbReference>
<dbReference type="AGR" id="RGD:1311986"/>
<dbReference type="CTD" id="11251"/>
<dbReference type="RGD" id="1311986">
    <property type="gene designation" value="Ptgdr2"/>
</dbReference>
<dbReference type="eggNOG" id="ENOG502QTYS">
    <property type="taxonomic scope" value="Eukaryota"/>
</dbReference>
<dbReference type="GeneTree" id="ENSGT00940000162009"/>
<dbReference type="HOGENOM" id="CLU_009579_8_0_1"/>
<dbReference type="InParanoid" id="Q6XKD3"/>
<dbReference type="OMA" id="CPDLCRK"/>
<dbReference type="OrthoDB" id="10008828at2759"/>
<dbReference type="PhylomeDB" id="Q6XKD3"/>
<dbReference type="Reactome" id="R-RNO-391908">
    <property type="pathway name" value="Prostanoid ligand receptors"/>
</dbReference>
<dbReference type="Reactome" id="R-RNO-418594">
    <property type="pathway name" value="G alpha (i) signalling events"/>
</dbReference>
<dbReference type="PRO" id="PR:Q6XKD3"/>
<dbReference type="Proteomes" id="UP000002494">
    <property type="component" value="Chromosome 1"/>
</dbReference>
<dbReference type="Proteomes" id="UP000234681">
    <property type="component" value="Chromosome 1"/>
</dbReference>
<dbReference type="Bgee" id="ENSRNOG00000036631">
    <property type="expression patterns" value="Expressed in testis and 5 other cell types or tissues"/>
</dbReference>
<dbReference type="GO" id="GO:0043005">
    <property type="term" value="C:neuron projection"/>
    <property type="evidence" value="ECO:0000318"/>
    <property type="project" value="GO_Central"/>
</dbReference>
<dbReference type="GO" id="GO:0005886">
    <property type="term" value="C:plasma membrane"/>
    <property type="evidence" value="ECO:0000318"/>
    <property type="project" value="GO_Central"/>
</dbReference>
<dbReference type="GO" id="GO:0004930">
    <property type="term" value="F:G protein-coupled receptor activity"/>
    <property type="evidence" value="ECO:0000250"/>
    <property type="project" value="UniProtKB"/>
</dbReference>
<dbReference type="GO" id="GO:0042923">
    <property type="term" value="F:neuropeptide binding"/>
    <property type="evidence" value="ECO:0000318"/>
    <property type="project" value="GO_Central"/>
</dbReference>
<dbReference type="GO" id="GO:0004956">
    <property type="term" value="F:prostaglandin D receptor activity"/>
    <property type="evidence" value="ECO:0000250"/>
    <property type="project" value="UniProtKB"/>
</dbReference>
<dbReference type="GO" id="GO:0004958">
    <property type="term" value="F:prostaglandin F receptor activity"/>
    <property type="evidence" value="ECO:0000266"/>
    <property type="project" value="RGD"/>
</dbReference>
<dbReference type="GO" id="GO:0001785">
    <property type="term" value="F:prostaglandin J receptor activity"/>
    <property type="evidence" value="ECO:0000266"/>
    <property type="project" value="RGD"/>
</dbReference>
<dbReference type="GO" id="GO:0007193">
    <property type="term" value="P:adenylate cyclase-inhibiting G protein-coupled receptor signaling pathway"/>
    <property type="evidence" value="ECO:0000266"/>
    <property type="project" value="RGD"/>
</dbReference>
<dbReference type="GO" id="GO:0019722">
    <property type="term" value="P:calcium-mediated signaling"/>
    <property type="evidence" value="ECO:0000250"/>
    <property type="project" value="UniProtKB"/>
</dbReference>
<dbReference type="GO" id="GO:0006935">
    <property type="term" value="P:chemotaxis"/>
    <property type="evidence" value="ECO:0000250"/>
    <property type="project" value="UniProtKB"/>
</dbReference>
<dbReference type="GO" id="GO:0007186">
    <property type="term" value="P:G protein-coupled receptor signaling pathway"/>
    <property type="evidence" value="ECO:0000250"/>
    <property type="project" value="UniProtKB"/>
</dbReference>
<dbReference type="GO" id="GO:2000255">
    <property type="term" value="P:negative regulation of male germ cell proliferation"/>
    <property type="evidence" value="ECO:0000266"/>
    <property type="project" value="RGD"/>
</dbReference>
<dbReference type="GO" id="GO:0007218">
    <property type="term" value="P:neuropeptide signaling pathway"/>
    <property type="evidence" value="ECO:0000318"/>
    <property type="project" value="GO_Central"/>
</dbReference>
<dbReference type="GO" id="GO:0045745">
    <property type="term" value="P:positive regulation of G protein-coupled receptor signaling pathway"/>
    <property type="evidence" value="ECO:0000266"/>
    <property type="project" value="RGD"/>
</dbReference>
<dbReference type="FunFam" id="1.20.1070.10:FF:000034">
    <property type="entry name" value="G-protein coupled receptor 1"/>
    <property type="match status" value="1"/>
</dbReference>
<dbReference type="Gene3D" id="1.20.1070.10">
    <property type="entry name" value="Rhodopsin 7-helix transmembrane proteins"/>
    <property type="match status" value="1"/>
</dbReference>
<dbReference type="InterPro" id="IPR000826">
    <property type="entry name" value="Formyl_rcpt-rel"/>
</dbReference>
<dbReference type="InterPro" id="IPR000276">
    <property type="entry name" value="GPCR_Rhodpsn"/>
</dbReference>
<dbReference type="InterPro" id="IPR017452">
    <property type="entry name" value="GPCR_Rhodpsn_7TM"/>
</dbReference>
<dbReference type="PANTHER" id="PTHR24225">
    <property type="entry name" value="CHEMOTACTIC RECEPTOR"/>
    <property type="match status" value="1"/>
</dbReference>
<dbReference type="PANTHER" id="PTHR24225:SF72">
    <property type="entry name" value="G-PROTEIN COUPLED RECEPTORS FAMILY 1 PROFILE DOMAIN-CONTAINING PROTEIN-RELATED"/>
    <property type="match status" value="1"/>
</dbReference>
<dbReference type="Pfam" id="PF00001">
    <property type="entry name" value="7tm_1"/>
    <property type="match status" value="1"/>
</dbReference>
<dbReference type="PRINTS" id="PR00526">
    <property type="entry name" value="FMETLEUPHER"/>
</dbReference>
<dbReference type="PRINTS" id="PR00237">
    <property type="entry name" value="GPCRRHODOPSN"/>
</dbReference>
<dbReference type="SUPFAM" id="SSF81321">
    <property type="entry name" value="Family A G protein-coupled receptor-like"/>
    <property type="match status" value="1"/>
</dbReference>
<dbReference type="PROSITE" id="PS00237">
    <property type="entry name" value="G_PROTEIN_RECEP_F1_1"/>
    <property type="match status" value="1"/>
</dbReference>
<dbReference type="PROSITE" id="PS50262">
    <property type="entry name" value="G_PROTEIN_RECEP_F1_2"/>
    <property type="match status" value="1"/>
</dbReference>
<keyword id="KW-1003">Cell membrane</keyword>
<keyword id="KW-1015">Disulfide bond</keyword>
<keyword id="KW-0297">G-protein coupled receptor</keyword>
<keyword id="KW-0325">Glycoprotein</keyword>
<keyword id="KW-0472">Membrane</keyword>
<keyword id="KW-0597">Phosphoprotein</keyword>
<keyword id="KW-0675">Receptor</keyword>
<keyword id="KW-1185">Reference proteome</keyword>
<keyword id="KW-0807">Transducer</keyword>
<keyword id="KW-0812">Transmembrane</keyword>
<keyword id="KW-1133">Transmembrane helix</keyword>
<gene>
    <name type="primary">Ptgdr2</name>
    <name type="synonym">Crth2</name>
    <name type="synonym">Gpr44</name>
</gene>
<sequence length="403" mass="45316">MANITLKPLCPLLEEMVQLPNHSNSSLRYIDHVSVLLHGLASLLGLVENGLILFVVGCRMRQTVVTTWVLHLALSDLLAAASLPFFTYFLAVGHSWELGTTFCKLHSSVFFLNMFASGFLLSAISLDRCLQVVRPVWAQNHRTVAAAHRVCLMLWALAVLNTVPYFVFRDTIPRRDGRIMCYYNMLLLNPGSDRDTTCDYRQKALAVSKFLLAFMVPLAIIASSHVAVSLQLHHRGRQRTGRFVRLVAAIVVAFILCWGPYHIFSLLEARAHSVTTLRQLASRGLPFVTSLAFFNSVVNPLLYVLTCPDMLHKLRRSLLTVLESVLVEDSDLSTGPGKRCRRRHRRRASSTTTPASTLLLADRFPQLRPARLIGWMRRGSAELPRRVREQSQEKQGSLSCTLD</sequence>
<proteinExistence type="evidence at protein level"/>